<gene>
    <name evidence="7" type="primary">Tgoln2</name>
    <name type="synonym">Ttgn2</name>
</gene>
<dbReference type="EMBL" id="D50032">
    <property type="protein sequence ID" value="BAA08758.1"/>
    <property type="molecule type" value="mRNA"/>
</dbReference>
<dbReference type="PIR" id="A56940">
    <property type="entry name" value="A56940"/>
</dbReference>
<dbReference type="PIR" id="B56940">
    <property type="entry name" value="B56940"/>
</dbReference>
<dbReference type="RefSeq" id="NP_033470.1">
    <property type="nucleotide sequence ID" value="NM_009444.1"/>
</dbReference>
<dbReference type="PDB" id="7RWA">
    <property type="method" value="EM"/>
    <property type="resolution" value="4.70 A"/>
    <property type="chains" value="Y/y=346-359"/>
</dbReference>
<dbReference type="PDBsum" id="7RWA"/>
<dbReference type="EMDB" id="EMD-24712"/>
<dbReference type="SMR" id="Q62314"/>
<dbReference type="BioGRID" id="204366">
    <property type="interactions" value="3"/>
</dbReference>
<dbReference type="FunCoup" id="Q62314">
    <property type="interactions" value="1"/>
</dbReference>
<dbReference type="GlyCosmos" id="Q62314">
    <property type="glycosylation" value="1 site, No reported glycans"/>
</dbReference>
<dbReference type="GlyGen" id="Q62314">
    <property type="glycosylation" value="1 site"/>
</dbReference>
<dbReference type="iPTMnet" id="Q62314"/>
<dbReference type="PhosphoSitePlus" id="Q62314"/>
<dbReference type="jPOST" id="Q62314"/>
<dbReference type="ProteomicsDB" id="258868"/>
<dbReference type="Pumba" id="Q62314"/>
<dbReference type="DNASU" id="22135"/>
<dbReference type="GeneID" id="22135"/>
<dbReference type="KEGG" id="mmu:22135"/>
<dbReference type="UCSC" id="uc033isn.1">
    <property type="organism name" value="mouse"/>
</dbReference>
<dbReference type="AGR" id="MGI:105079"/>
<dbReference type="CTD" id="10618"/>
<dbReference type="MGI" id="MGI:105079">
    <property type="gene designation" value="Tgoln2"/>
</dbReference>
<dbReference type="InParanoid" id="Q62314"/>
<dbReference type="PhylomeDB" id="Q62314"/>
<dbReference type="BioGRID-ORCS" id="22135">
    <property type="hits" value="1 hit in 16 CRISPR screens"/>
</dbReference>
<dbReference type="PRO" id="PR:Q62314"/>
<dbReference type="Proteomes" id="UP000000589">
    <property type="component" value="Unplaced"/>
</dbReference>
<dbReference type="RNAct" id="Q62314">
    <property type="molecule type" value="protein"/>
</dbReference>
<dbReference type="GO" id="GO:0005794">
    <property type="term" value="C:Golgi apparatus"/>
    <property type="evidence" value="ECO:0000266"/>
    <property type="project" value="MGI"/>
</dbReference>
<dbReference type="GO" id="GO:0005886">
    <property type="term" value="C:plasma membrane"/>
    <property type="evidence" value="ECO:0007669"/>
    <property type="project" value="UniProtKB-SubCell"/>
</dbReference>
<dbReference type="GO" id="GO:0005802">
    <property type="term" value="C:trans-Golgi network"/>
    <property type="evidence" value="ECO:0000314"/>
    <property type="project" value="MGI"/>
</dbReference>
<dbReference type="GO" id="GO:0030140">
    <property type="term" value="C:trans-Golgi network transport vesicle"/>
    <property type="evidence" value="ECO:0000314"/>
    <property type="project" value="MGI"/>
</dbReference>
<dbReference type="PANTHER" id="PTHR23211:SF0">
    <property type="entry name" value="TRANS-GOLGI NETWORK INTEGRAL MEMBRANE PROTEIN 2"/>
    <property type="match status" value="1"/>
</dbReference>
<dbReference type="PANTHER" id="PTHR23211">
    <property type="entry name" value="TRANS-GOLGI NETWORK INTEGRAL MEMBRANE PROTEIN TGN38"/>
    <property type="match status" value="1"/>
</dbReference>
<dbReference type="Pfam" id="PF17818">
    <property type="entry name" value="KCT2"/>
    <property type="match status" value="1"/>
</dbReference>
<name>TGON2_MOUSE</name>
<feature type="signal peptide" evidence="3">
    <location>
        <begin position="1"/>
        <end position="17"/>
    </location>
</feature>
<feature type="chain" id="PRO_0000022487" description="Trans-Golgi network integral membrane protein 2">
    <location>
        <begin position="18"/>
        <end position="363"/>
    </location>
</feature>
<feature type="topological domain" description="Extracellular" evidence="3">
    <location>
        <begin position="18"/>
        <end position="308"/>
    </location>
</feature>
<feature type="transmembrane region" description="Helical" evidence="3">
    <location>
        <begin position="309"/>
        <end position="329"/>
    </location>
</feature>
<feature type="topological domain" description="Cytoplasmic" evidence="3">
    <location>
        <begin position="330"/>
        <end position="363"/>
    </location>
</feature>
<feature type="repeat" description="1">
    <location>
        <begin position="133"/>
        <end position="140"/>
    </location>
</feature>
<feature type="repeat" description="2">
    <location>
        <begin position="141"/>
        <end position="148"/>
    </location>
</feature>
<feature type="repeat" description="3">
    <location>
        <begin position="149"/>
        <end position="156"/>
    </location>
</feature>
<feature type="repeat" description="4">
    <location>
        <begin position="157"/>
        <end position="164"/>
    </location>
</feature>
<feature type="repeat" description="5">
    <location>
        <begin position="165"/>
        <end position="172"/>
    </location>
</feature>
<feature type="repeat" description="6">
    <location>
        <begin position="173"/>
        <end position="180"/>
    </location>
</feature>
<feature type="repeat" description="7">
    <location>
        <begin position="181"/>
        <end position="188"/>
    </location>
</feature>
<feature type="region of interest" description="Disordered" evidence="4">
    <location>
        <begin position="23"/>
        <end position="302"/>
    </location>
</feature>
<feature type="region of interest" description="7 X 8 AA tandem repeats">
    <location>
        <begin position="133"/>
        <end position="188"/>
    </location>
</feature>
<feature type="short sequence motif" description="Endocytosis signal" evidence="1">
    <location>
        <begin position="356"/>
        <end position="359"/>
    </location>
</feature>
<feature type="compositionally biased region" description="Polar residues" evidence="4">
    <location>
        <begin position="29"/>
        <end position="59"/>
    </location>
</feature>
<feature type="compositionally biased region" description="Basic and acidic residues" evidence="4">
    <location>
        <begin position="96"/>
        <end position="115"/>
    </location>
</feature>
<feature type="compositionally biased region" description="Gly residues" evidence="4">
    <location>
        <begin position="139"/>
        <end position="156"/>
    </location>
</feature>
<feature type="compositionally biased region" description="Basic and acidic residues" evidence="4">
    <location>
        <begin position="171"/>
        <end position="188"/>
    </location>
</feature>
<feature type="compositionally biased region" description="Basic and acidic residues" evidence="4">
    <location>
        <begin position="196"/>
        <end position="210"/>
    </location>
</feature>
<feature type="compositionally biased region" description="Basic and acidic residues" evidence="4">
    <location>
        <begin position="230"/>
        <end position="252"/>
    </location>
</feature>
<feature type="compositionally biased region" description="Acidic residues" evidence="4">
    <location>
        <begin position="253"/>
        <end position="269"/>
    </location>
</feature>
<feature type="compositionally biased region" description="Polar residues" evidence="4">
    <location>
        <begin position="274"/>
        <end position="288"/>
    </location>
</feature>
<feature type="compositionally biased region" description="Basic and acidic residues" evidence="4">
    <location>
        <begin position="289"/>
        <end position="298"/>
    </location>
</feature>
<feature type="modified residue" description="Phosphoserine" evidence="2">
    <location>
        <position position="42"/>
    </location>
</feature>
<feature type="modified residue" description="Phosphoserine" evidence="2">
    <location>
        <position position="220"/>
    </location>
</feature>
<feature type="modified residue" description="Phosphoserine" evidence="2">
    <location>
        <position position="277"/>
    </location>
</feature>
<feature type="glycosylation site" description="N-linked (GlcNAc...) asparagine" evidence="3">
    <location>
        <position position="303"/>
    </location>
</feature>
<proteinExistence type="evidence at protein level"/>
<keyword id="KW-0002">3D-structure</keyword>
<keyword id="KW-1003">Cell membrane</keyword>
<keyword id="KW-0325">Glycoprotein</keyword>
<keyword id="KW-0333">Golgi apparatus</keyword>
<keyword id="KW-0472">Membrane</keyword>
<keyword id="KW-0597">Phosphoprotein</keyword>
<keyword id="KW-1185">Reference proteome</keyword>
<keyword id="KW-0677">Repeat</keyword>
<keyword id="KW-0732">Signal</keyword>
<keyword id="KW-0812">Transmembrane</keyword>
<keyword id="KW-1133">Transmembrane helix</keyword>
<accession>Q62314</accession>
<reference key="1">
    <citation type="journal article" date="1995" name="J. Biol. Chem.">
        <title>Strain-specific presence of two TGN38 isoforms and absence of TGN41 in mouse.</title>
        <authorList>
            <person name="Kasai K."/>
            <person name="Takahashi S."/>
            <person name="Murakami K."/>
            <person name="Nakayama K."/>
        </authorList>
    </citation>
    <scope>NUCLEOTIDE SEQUENCE [MRNA]</scope>
    <source>
        <strain>ICR</strain>
        <tissue>Brain</tissue>
    </source>
</reference>
<reference key="2">
    <citation type="journal article" date="2007" name="Proc. Natl. Acad. Sci. U.S.A.">
        <title>Large-scale phosphorylation analysis of mouse liver.</title>
        <authorList>
            <person name="Villen J."/>
            <person name="Beausoleil S.A."/>
            <person name="Gerber S.A."/>
            <person name="Gygi S.P."/>
        </authorList>
    </citation>
    <scope>IDENTIFICATION BY MASS SPECTROMETRY [LARGE SCALE ANALYSIS]</scope>
    <source>
        <tissue>Liver</tissue>
    </source>
</reference>
<comment type="function">
    <text>May be involved in regulating membrane traffic to and from trans-Golgi network.</text>
</comment>
<comment type="subcellular location">
    <subcellularLocation>
        <location evidence="1">Cell membrane</location>
        <topology evidence="1">Single-pass type I membrane protein</topology>
    </subcellularLocation>
    <subcellularLocation>
        <location evidence="1">Golgi apparatus</location>
        <location evidence="1">trans-Golgi network membrane</location>
        <topology evidence="1">Single-pass type I membrane protein</topology>
    </subcellularLocation>
    <text evidence="1">Primarily in trans-Golgi network. Cycles between the trans-Golgi network and the cell surface returning via endosomes (By similarity).</text>
</comment>
<comment type="tissue specificity">
    <text>Widely expressed.</text>
</comment>
<comment type="miscellaneous">
    <text>Not found in strains BALB/c, C57BL/6 and DBA/2.</text>
</comment>
<sequence>MRFQVALLLLSVAVARALPPVYKRDADSGDSQNPPNQPSKQSSTPLPPESSNQVKTTRPTDGQGQKSDKKDQDKTTLAAVSSKAESGPPTAATDHSLGDSRRQPEKTDAELKETARPLSPVNPKLEKSDQSSTEDSGKPTGGNSGKPTGGDSGKPTGGDSDKPTEAGSNKATEDDSGKSTKVDLDKPTSKIFPDTETSKTDKVQPTEKGQKATLTSKTESGETLAGDSDFSLKPEKGDKSSEPTEDVETKEIEEGDTEPEEGSPLEEENEKVSGPSSSENQEGTLTDSMKNEKDDLYKDSSGNTSAESSHFFAYLVTAAVLVAVLYIAYHNKRKIIAFALEGKRSKVTRRPKASDYQRLNLKL</sequence>
<organism>
    <name type="scientific">Mus musculus</name>
    <name type="common">Mouse</name>
    <dbReference type="NCBI Taxonomy" id="10090"/>
    <lineage>
        <taxon>Eukaryota</taxon>
        <taxon>Metazoa</taxon>
        <taxon>Chordata</taxon>
        <taxon>Craniata</taxon>
        <taxon>Vertebrata</taxon>
        <taxon>Euteleostomi</taxon>
        <taxon>Mammalia</taxon>
        <taxon>Eutheria</taxon>
        <taxon>Euarchontoglires</taxon>
        <taxon>Glires</taxon>
        <taxon>Rodentia</taxon>
        <taxon>Myomorpha</taxon>
        <taxon>Muroidea</taxon>
        <taxon>Muridae</taxon>
        <taxon>Murinae</taxon>
        <taxon>Mus</taxon>
        <taxon>Mus</taxon>
    </lineage>
</organism>
<evidence type="ECO:0000250" key="1"/>
<evidence type="ECO:0000250" key="2">
    <source>
        <dbReference type="UniProtKB" id="O43493"/>
    </source>
</evidence>
<evidence type="ECO:0000255" key="3"/>
<evidence type="ECO:0000256" key="4">
    <source>
        <dbReference type="SAM" id="MobiDB-lite"/>
    </source>
</evidence>
<evidence type="ECO:0000303" key="5">
    <source>
    </source>
</evidence>
<evidence type="ECO:0000305" key="6"/>
<evidence type="ECO:0000312" key="7">
    <source>
        <dbReference type="MGI" id="MGI:105079"/>
    </source>
</evidence>
<protein>
    <recommendedName>
        <fullName evidence="6">Trans-Golgi network integral membrane protein 2</fullName>
    </recommendedName>
    <alternativeName>
        <fullName evidence="5">TGN38B</fullName>
    </alternativeName>
</protein>